<accession>P15063</accession>
<accession>Q3HVJ5</accession>
<dbReference type="EMBL" id="X17455">
    <property type="protein sequence ID" value="CAA35499.1"/>
    <property type="status" value="ALT_FRAME"/>
    <property type="molecule type" value="Genomic_DNA"/>
</dbReference>
<dbReference type="EMBL" id="DQ191783">
    <property type="protein sequence ID" value="ABA40415.1"/>
    <property type="molecule type" value="mRNA"/>
</dbReference>
<dbReference type="EMBL" id="DQ191784">
    <property type="protein sequence ID" value="ABA40416.1"/>
    <property type="molecule type" value="mRNA"/>
</dbReference>
<dbReference type="EMBL" id="DQ191785">
    <property type="protein sequence ID" value="ABA40417.1"/>
    <property type="molecule type" value="mRNA"/>
</dbReference>
<dbReference type="EMBL" id="DQ191786">
    <property type="protein sequence ID" value="ABA40418.1"/>
    <property type="molecule type" value="mRNA"/>
</dbReference>
<dbReference type="EMBL" id="DQ191782">
    <property type="protein sequence ID" value="ABA40414.1"/>
    <property type="molecule type" value="mRNA"/>
</dbReference>
<dbReference type="EMBL" id="M21133">
    <property type="status" value="NOT_ANNOTATED_CDS"/>
    <property type="molecule type" value="Genomic_DNA"/>
</dbReference>
<dbReference type="PIR" id="A45502">
    <property type="entry name" value="TVRTBM"/>
</dbReference>
<dbReference type="RefSeq" id="NP_001013181.2">
    <property type="nucleotide sequence ID" value="NM_001013163.2"/>
</dbReference>
<dbReference type="FunCoup" id="P15063">
    <property type="interactions" value="41"/>
</dbReference>
<dbReference type="STRING" id="10116.ENSRNOP00000059721"/>
<dbReference type="PhosphoSitePlus" id="P15063"/>
<dbReference type="PaxDb" id="10116-ENSRNOP00000059721"/>
<dbReference type="Ensembl" id="ENSRNOT00000064358.2">
    <property type="protein sequence ID" value="ENSRNOP00000059721.1"/>
    <property type="gene ID" value="ENSRNOG00000042556.2"/>
</dbReference>
<dbReference type="GeneID" id="311807"/>
<dbReference type="KEGG" id="rno:311807"/>
<dbReference type="UCSC" id="RGD:1584970">
    <property type="organism name" value="rat"/>
</dbReference>
<dbReference type="AGR" id="RGD:1584970"/>
<dbReference type="CTD" id="107771"/>
<dbReference type="RGD" id="1584970">
    <property type="gene designation" value="Bmyc"/>
</dbReference>
<dbReference type="eggNOG" id="KOG2483">
    <property type="taxonomic scope" value="Eukaryota"/>
</dbReference>
<dbReference type="GeneTree" id="ENSGT00940000155285"/>
<dbReference type="HOGENOM" id="CLU_135109_0_0_1"/>
<dbReference type="InParanoid" id="P15063"/>
<dbReference type="OMA" id="YFMCDDE"/>
<dbReference type="OrthoDB" id="5964374at2759"/>
<dbReference type="PhylomeDB" id="P15063"/>
<dbReference type="PRO" id="PR:P15063"/>
<dbReference type="Proteomes" id="UP000002494">
    <property type="component" value="Chromosome 3"/>
</dbReference>
<dbReference type="Bgee" id="ENSRNOG00000042556">
    <property type="expression patterns" value="Expressed in cerebellum and 20 other cell types or tissues"/>
</dbReference>
<dbReference type="GO" id="GO:0005634">
    <property type="term" value="C:nucleus"/>
    <property type="evidence" value="ECO:0007669"/>
    <property type="project" value="UniProtKB-SubCell"/>
</dbReference>
<dbReference type="GO" id="GO:0005819">
    <property type="term" value="C:spindle"/>
    <property type="evidence" value="ECO:0007669"/>
    <property type="project" value="Ensembl"/>
</dbReference>
<dbReference type="GO" id="GO:0003700">
    <property type="term" value="F:DNA-binding transcription factor activity"/>
    <property type="evidence" value="ECO:0007669"/>
    <property type="project" value="InterPro"/>
</dbReference>
<dbReference type="InterPro" id="IPR050433">
    <property type="entry name" value="Myc_transcription_factors"/>
</dbReference>
<dbReference type="InterPro" id="IPR002418">
    <property type="entry name" value="Tscrpt_reg_Myc"/>
</dbReference>
<dbReference type="InterPro" id="IPR012682">
    <property type="entry name" value="Tscrpt_reg_Myc_N"/>
</dbReference>
<dbReference type="PANTHER" id="PTHR45851">
    <property type="entry name" value="MYC PROTO-ONCOGENE"/>
    <property type="match status" value="1"/>
</dbReference>
<dbReference type="Pfam" id="PF01056">
    <property type="entry name" value="Myc_N"/>
    <property type="match status" value="1"/>
</dbReference>
<dbReference type="PRINTS" id="PR00044">
    <property type="entry name" value="LEUZIPPRMYC"/>
</dbReference>
<gene>
    <name type="primary">Mycb</name>
    <name type="synonym">Bmyc</name>
</gene>
<comment type="function">
    <text evidence="1">Seems to act as an inhibitor of cellular proliferation.</text>
</comment>
<comment type="subcellular location">
    <subcellularLocation>
        <location evidence="1">Nucleus</location>
    </subcellularLocation>
</comment>
<comment type="sequence caution" evidence="4">
    <conflict type="frameshift">
        <sequence resource="EMBL-CDS" id="CAA35499"/>
    </conflict>
</comment>
<evidence type="ECO:0000250" key="1"/>
<evidence type="ECO:0000250" key="2">
    <source>
        <dbReference type="UniProtKB" id="Q6P8Z1"/>
    </source>
</evidence>
<evidence type="ECO:0000256" key="3">
    <source>
        <dbReference type="SAM" id="MobiDB-lite"/>
    </source>
</evidence>
<evidence type="ECO:0000305" key="4"/>
<sequence>MPLHVSLANGNRDLDYDSVQPYFMCDDEEEDVHQQPPQPPAPSEDIWKKFELLPTPRPSPGHPGLYSPPCEAVAASFSPRDHDGDSFSTADLPELPGDAVKQSFVCDPDDETFVKNIILQDCMWNGFSASAKLVSKLDPYQAVRKEGASVSPAADVEPATPPDCTCNT</sequence>
<reference key="1">
    <citation type="journal article" date="1989" name="Oncogene">
        <title>Nucleotide sequence of the rat Bmyc gene.</title>
        <authorList>
            <person name="Asker C."/>
            <person name="Steinitz M."/>
            <person name="Andersson K."/>
            <person name="Suemegi J."/>
            <person name="Klein G."/>
            <person name="Ingvarsson S."/>
        </authorList>
    </citation>
    <scope>NUCLEOTIDE SEQUENCE [GENOMIC DNA]</scope>
    <source>
        <strain>Sprague-Dawley</strain>
        <tissue>Brain</tissue>
        <tissue>Liver</tissue>
    </source>
</reference>
<reference key="2">
    <citation type="submission" date="2005-09" db="EMBL/GenBank/DDBJ databases">
        <title>Evaluation of B-myc as a candidate for Ept6.</title>
        <authorList>
            <person name="Hansen K.K."/>
            <person name="McIvor K.J."/>
            <person name="Streblow R.C."/>
            <person name="Shull J.D."/>
        </authorList>
    </citation>
    <scope>NUCLEOTIDE SEQUENCE [MRNA]</scope>
    <source>
        <strain>ACI/SegHsd</strain>
        <strain>Brown Norway/SsNHsd</strain>
        <strain>COP/CrCrl</strain>
        <strain>DA</strain>
        <strain>Fischer 344</strain>
        <tissue>Spleen</tissue>
    </source>
</reference>
<reference key="3">
    <citation type="journal article" date="1988" name="Mol. Cell. Biol.">
        <title>Structure and expression of B-myc, a new member of the myc gene family.</title>
        <authorList>
            <person name="Ingvarsson S."/>
            <person name="Asker C."/>
            <person name="Axelson H."/>
            <person name="Klein G."/>
            <person name="Suemegi J."/>
        </authorList>
    </citation>
    <scope>NUCLEOTIDE SEQUENCE [GENOMIC DNA] OF 1-120</scope>
</reference>
<organism>
    <name type="scientific">Rattus norvegicus</name>
    <name type="common">Rat</name>
    <dbReference type="NCBI Taxonomy" id="10116"/>
    <lineage>
        <taxon>Eukaryota</taxon>
        <taxon>Metazoa</taxon>
        <taxon>Chordata</taxon>
        <taxon>Craniata</taxon>
        <taxon>Vertebrata</taxon>
        <taxon>Euteleostomi</taxon>
        <taxon>Mammalia</taxon>
        <taxon>Eutheria</taxon>
        <taxon>Euarchontoglires</taxon>
        <taxon>Glires</taxon>
        <taxon>Rodentia</taxon>
        <taxon>Myomorpha</taxon>
        <taxon>Muroidea</taxon>
        <taxon>Muridae</taxon>
        <taxon>Murinae</taxon>
        <taxon>Rattus</taxon>
    </lineage>
</organism>
<keyword id="KW-0539">Nucleus</keyword>
<keyword id="KW-0597">Phosphoprotein</keyword>
<keyword id="KW-1185">Reference proteome</keyword>
<feature type="chain" id="PRO_0000127340" description="Protein B-Myc">
    <location>
        <begin position="1"/>
        <end position="168"/>
    </location>
</feature>
<feature type="region of interest" description="Disordered" evidence="3">
    <location>
        <begin position="26"/>
        <end position="94"/>
    </location>
</feature>
<feature type="region of interest" description="Disordered" evidence="3">
    <location>
        <begin position="146"/>
        <end position="168"/>
    </location>
</feature>
<feature type="modified residue" description="Phosphoserine" evidence="2">
    <location>
        <position position="59"/>
    </location>
</feature>
<feature type="modified residue" description="Phosphoserine" evidence="2">
    <location>
        <position position="67"/>
    </location>
</feature>
<name>MYCB_RAT</name>
<proteinExistence type="evidence at transcript level"/>
<protein>
    <recommendedName>
        <fullName>Protein B-Myc</fullName>
    </recommendedName>
</protein>